<sequence>MVAVSGTQHTRTVSPTRWIVYAGSVFAGAWLATQLFYLAQIALWSFVNPGSTAFMRTDAWWLSRDKPPAQIQHQWVPYDQISRNLKRALIASEDSTFATNNGYDVDAILQAWEKNKARGRIVAGGSTITQQLARNLFLSREKSYIRKGQELIITWMLETVLDKERIFEIYLNSVEWGRGVYGAEAAARYYYRIPASRLGAWQSARLAVMLPKPRWFDAHRGSAYQAQRAAVIARRMGAAELPQSE</sequence>
<keyword id="KW-0997">Cell inner membrane</keyword>
<keyword id="KW-1003">Cell membrane</keyword>
<keyword id="KW-0133">Cell shape</keyword>
<keyword id="KW-0961">Cell wall biogenesis/degradation</keyword>
<keyword id="KW-0328">Glycosyltransferase</keyword>
<keyword id="KW-0472">Membrane</keyword>
<keyword id="KW-0573">Peptidoglycan synthesis</keyword>
<keyword id="KW-0808">Transferase</keyword>
<keyword id="KW-0812">Transmembrane</keyword>
<keyword id="KW-1133">Transmembrane helix</keyword>
<reference key="1">
    <citation type="submission" date="2005-10" db="EMBL/GenBank/DDBJ databases">
        <title>Complete sequence of chromosome 1 of Burkholderia sp. 383.</title>
        <authorList>
            <consortium name="US DOE Joint Genome Institute"/>
            <person name="Copeland A."/>
            <person name="Lucas S."/>
            <person name="Lapidus A."/>
            <person name="Barry K."/>
            <person name="Detter J.C."/>
            <person name="Glavina T."/>
            <person name="Hammon N."/>
            <person name="Israni S."/>
            <person name="Pitluck S."/>
            <person name="Chain P."/>
            <person name="Malfatti S."/>
            <person name="Shin M."/>
            <person name="Vergez L."/>
            <person name="Schmutz J."/>
            <person name="Larimer F."/>
            <person name="Land M."/>
            <person name="Kyrpides N."/>
            <person name="Lykidis A."/>
            <person name="Richardson P."/>
        </authorList>
    </citation>
    <scope>NUCLEOTIDE SEQUENCE [LARGE SCALE GENOMIC DNA]</scope>
    <source>
        <strain>ATCC 17760 / DSM 23089 / LMG 22485 / NCIMB 9086 / R18194 / 383</strain>
    </source>
</reference>
<accession>Q39JR9</accession>
<name>MTGA_BURL3</name>
<gene>
    <name evidence="1" type="primary">mtgA</name>
    <name type="ordered locus">Bcep18194_A3696</name>
</gene>
<proteinExistence type="inferred from homology"/>
<feature type="chain" id="PRO_0000257662" description="Biosynthetic peptidoglycan transglycosylase">
    <location>
        <begin position="1"/>
        <end position="245"/>
    </location>
</feature>
<feature type="transmembrane region" description="Helical" evidence="1">
    <location>
        <begin position="20"/>
        <end position="42"/>
    </location>
</feature>
<organism>
    <name type="scientific">Burkholderia lata (strain ATCC 17760 / DSM 23089 / LMG 22485 / NCIMB 9086 / R18194 / 383)</name>
    <dbReference type="NCBI Taxonomy" id="482957"/>
    <lineage>
        <taxon>Bacteria</taxon>
        <taxon>Pseudomonadati</taxon>
        <taxon>Pseudomonadota</taxon>
        <taxon>Betaproteobacteria</taxon>
        <taxon>Burkholderiales</taxon>
        <taxon>Burkholderiaceae</taxon>
        <taxon>Burkholderia</taxon>
        <taxon>Burkholderia cepacia complex</taxon>
    </lineage>
</organism>
<evidence type="ECO:0000255" key="1">
    <source>
        <dbReference type="HAMAP-Rule" id="MF_00766"/>
    </source>
</evidence>
<dbReference type="EC" id="2.4.99.28" evidence="1"/>
<dbReference type="EMBL" id="CP000151">
    <property type="protein sequence ID" value="ABB07297.1"/>
    <property type="molecule type" value="Genomic_DNA"/>
</dbReference>
<dbReference type="RefSeq" id="WP_011350887.1">
    <property type="nucleotide sequence ID" value="NC_007510.1"/>
</dbReference>
<dbReference type="SMR" id="Q39JR9"/>
<dbReference type="CAZy" id="GT51">
    <property type="family name" value="Glycosyltransferase Family 51"/>
</dbReference>
<dbReference type="GeneID" id="45093610"/>
<dbReference type="KEGG" id="bur:Bcep18194_A3696"/>
<dbReference type="HOGENOM" id="CLU_006354_1_0_4"/>
<dbReference type="UniPathway" id="UPA00219"/>
<dbReference type="Proteomes" id="UP000002705">
    <property type="component" value="Chromosome 1"/>
</dbReference>
<dbReference type="GO" id="GO:0009274">
    <property type="term" value="C:peptidoglycan-based cell wall"/>
    <property type="evidence" value="ECO:0007669"/>
    <property type="project" value="InterPro"/>
</dbReference>
<dbReference type="GO" id="GO:0005886">
    <property type="term" value="C:plasma membrane"/>
    <property type="evidence" value="ECO:0007669"/>
    <property type="project" value="UniProtKB-SubCell"/>
</dbReference>
<dbReference type="GO" id="GO:0016763">
    <property type="term" value="F:pentosyltransferase activity"/>
    <property type="evidence" value="ECO:0007669"/>
    <property type="project" value="InterPro"/>
</dbReference>
<dbReference type="GO" id="GO:0008955">
    <property type="term" value="F:peptidoglycan glycosyltransferase activity"/>
    <property type="evidence" value="ECO:0007669"/>
    <property type="project" value="UniProtKB-UniRule"/>
</dbReference>
<dbReference type="GO" id="GO:0071555">
    <property type="term" value="P:cell wall organization"/>
    <property type="evidence" value="ECO:0007669"/>
    <property type="project" value="UniProtKB-KW"/>
</dbReference>
<dbReference type="GO" id="GO:0009252">
    <property type="term" value="P:peptidoglycan biosynthetic process"/>
    <property type="evidence" value="ECO:0007669"/>
    <property type="project" value="UniProtKB-UniRule"/>
</dbReference>
<dbReference type="GO" id="GO:0008360">
    <property type="term" value="P:regulation of cell shape"/>
    <property type="evidence" value="ECO:0007669"/>
    <property type="project" value="UniProtKB-KW"/>
</dbReference>
<dbReference type="Gene3D" id="1.10.3810.10">
    <property type="entry name" value="Biosynthetic peptidoglycan transglycosylase-like"/>
    <property type="match status" value="1"/>
</dbReference>
<dbReference type="HAMAP" id="MF_00766">
    <property type="entry name" value="PGT_MtgA"/>
    <property type="match status" value="1"/>
</dbReference>
<dbReference type="InterPro" id="IPR001264">
    <property type="entry name" value="Glyco_trans_51"/>
</dbReference>
<dbReference type="InterPro" id="IPR023346">
    <property type="entry name" value="Lysozyme-like_dom_sf"/>
</dbReference>
<dbReference type="InterPro" id="IPR036950">
    <property type="entry name" value="PBP_transglycosylase"/>
</dbReference>
<dbReference type="InterPro" id="IPR011812">
    <property type="entry name" value="Pep_trsgly"/>
</dbReference>
<dbReference type="NCBIfam" id="TIGR02070">
    <property type="entry name" value="mono_pep_trsgly"/>
    <property type="match status" value="1"/>
</dbReference>
<dbReference type="PANTHER" id="PTHR30400:SF0">
    <property type="entry name" value="BIOSYNTHETIC PEPTIDOGLYCAN TRANSGLYCOSYLASE"/>
    <property type="match status" value="1"/>
</dbReference>
<dbReference type="PANTHER" id="PTHR30400">
    <property type="entry name" value="MONOFUNCTIONAL BIOSYNTHETIC PEPTIDOGLYCAN TRANSGLYCOSYLASE"/>
    <property type="match status" value="1"/>
</dbReference>
<dbReference type="Pfam" id="PF00912">
    <property type="entry name" value="Transgly"/>
    <property type="match status" value="1"/>
</dbReference>
<dbReference type="SUPFAM" id="SSF53955">
    <property type="entry name" value="Lysozyme-like"/>
    <property type="match status" value="1"/>
</dbReference>
<comment type="function">
    <text evidence="1">Peptidoglycan polymerase that catalyzes glycan chain elongation from lipid-linked precursors.</text>
</comment>
<comment type="catalytic activity">
    <reaction evidence="1">
        <text>[GlcNAc-(1-&gt;4)-Mur2Ac(oyl-L-Ala-gamma-D-Glu-L-Lys-D-Ala-D-Ala)](n)-di-trans,octa-cis-undecaprenyl diphosphate + beta-D-GlcNAc-(1-&gt;4)-Mur2Ac(oyl-L-Ala-gamma-D-Glu-L-Lys-D-Ala-D-Ala)-di-trans,octa-cis-undecaprenyl diphosphate = [GlcNAc-(1-&gt;4)-Mur2Ac(oyl-L-Ala-gamma-D-Glu-L-Lys-D-Ala-D-Ala)](n+1)-di-trans,octa-cis-undecaprenyl diphosphate + di-trans,octa-cis-undecaprenyl diphosphate + H(+)</text>
        <dbReference type="Rhea" id="RHEA:23708"/>
        <dbReference type="Rhea" id="RHEA-COMP:9602"/>
        <dbReference type="Rhea" id="RHEA-COMP:9603"/>
        <dbReference type="ChEBI" id="CHEBI:15378"/>
        <dbReference type="ChEBI" id="CHEBI:58405"/>
        <dbReference type="ChEBI" id="CHEBI:60033"/>
        <dbReference type="ChEBI" id="CHEBI:78435"/>
        <dbReference type="EC" id="2.4.99.28"/>
    </reaction>
</comment>
<comment type="pathway">
    <text evidence="1">Cell wall biogenesis; peptidoglycan biosynthesis.</text>
</comment>
<comment type="subcellular location">
    <subcellularLocation>
        <location evidence="1">Cell inner membrane</location>
        <topology evidence="1">Single-pass membrane protein</topology>
    </subcellularLocation>
</comment>
<comment type="similarity">
    <text evidence="1">Belongs to the glycosyltransferase 51 family.</text>
</comment>
<protein>
    <recommendedName>
        <fullName evidence="1">Biosynthetic peptidoglycan transglycosylase</fullName>
        <ecNumber evidence="1">2.4.99.28</ecNumber>
    </recommendedName>
    <alternativeName>
        <fullName evidence="1">Glycan polymerase</fullName>
    </alternativeName>
    <alternativeName>
        <fullName evidence="1">Peptidoglycan glycosyltransferase MtgA</fullName>
        <shortName evidence="1">PGT</shortName>
    </alternativeName>
</protein>